<proteinExistence type="inferred from homology"/>
<evidence type="ECO:0000250" key="1"/>
<evidence type="ECO:0000305" key="2"/>
<protein>
    <recommendedName>
        <fullName>D-fructose 1,6-bisphosphatase class 2/sedoheptulose 1,7-bisphosphatase</fullName>
        <shortName>FBPase class 2/SBPase</shortName>
        <ecNumber>3.1.3.11</ecNumber>
        <ecNumber>3.1.3.37</ecNumber>
    </recommendedName>
</protein>
<keyword id="KW-0113">Calvin cycle</keyword>
<keyword id="KW-0119">Carbohydrate metabolism</keyword>
<keyword id="KW-0378">Hydrolase</keyword>
<keyword id="KW-0464">Manganese</keyword>
<keyword id="KW-0479">Metal-binding</keyword>
<name>FBSB_PROMS</name>
<comment type="function">
    <text evidence="1">Catalyzes the hydrolysis of fructose 1,6-bisphosphate (Fru 1,6-P2) and sedoheptulose 1,7-bisphosphate (Sed 1,7-P2) to fructose 6-phosphate and sedoheptulose 7-phosphate, respectively.</text>
</comment>
<comment type="catalytic activity">
    <reaction>
        <text>beta-D-fructose 1,6-bisphosphate + H2O = beta-D-fructose 6-phosphate + phosphate</text>
        <dbReference type="Rhea" id="RHEA:11064"/>
        <dbReference type="ChEBI" id="CHEBI:15377"/>
        <dbReference type="ChEBI" id="CHEBI:32966"/>
        <dbReference type="ChEBI" id="CHEBI:43474"/>
        <dbReference type="ChEBI" id="CHEBI:57634"/>
        <dbReference type="EC" id="3.1.3.11"/>
    </reaction>
</comment>
<comment type="catalytic activity">
    <reaction>
        <text>D-sedoheptulose 1,7-bisphosphate + H2O = D-sedoheptulose 7-phosphate + phosphate</text>
        <dbReference type="Rhea" id="RHEA:17461"/>
        <dbReference type="ChEBI" id="CHEBI:15377"/>
        <dbReference type="ChEBI" id="CHEBI:43474"/>
        <dbReference type="ChEBI" id="CHEBI:57483"/>
        <dbReference type="ChEBI" id="CHEBI:58335"/>
        <dbReference type="EC" id="3.1.3.37"/>
    </reaction>
</comment>
<comment type="cofactor">
    <cofactor evidence="1">
        <name>Mn(2+)</name>
        <dbReference type="ChEBI" id="CHEBI:29035"/>
    </cofactor>
</comment>
<comment type="pathway">
    <text>Carbohydrate biosynthesis; Calvin cycle.</text>
</comment>
<comment type="subunit">
    <text evidence="1">Homotetramer.</text>
</comment>
<comment type="similarity">
    <text evidence="2">Belongs to the FBPase class 2 family.</text>
</comment>
<sequence length="333" mass="35044">MNQTLIQEILEVVEQAAIASAKLTGLGQKDEADAAAVEAMRLRMGKIEMKGKIVIGEGERDEAPMLYIGEEVGSGSGPGVDFAVDPCEGTNLCANNQRGSMAVLAASDTGGLFNAPDFYMNKLAAPPAAKGKVDIRNSATENLKILSDCLGLSIDELTVVVMDRTRHKDLIKEIRGCGAKVQPISDGDVQAAIACGFAGIGTHCLMGIGAAPEGVISAAAMRALGGHFQGQLVYDPAIAQTSEWADYTKEGNIKRLNEMGITDIDKIYEANELASGENVVFAGSGITDGLLFDGVKFERDCVRTSSLVISTLDSTARFTNTVHIKDGAKSISL</sequence>
<organism>
    <name type="scientific">Prochlorococcus marinus (strain AS9601)</name>
    <dbReference type="NCBI Taxonomy" id="146891"/>
    <lineage>
        <taxon>Bacteria</taxon>
        <taxon>Bacillati</taxon>
        <taxon>Cyanobacteriota</taxon>
        <taxon>Cyanophyceae</taxon>
        <taxon>Synechococcales</taxon>
        <taxon>Prochlorococcaceae</taxon>
        <taxon>Prochlorococcus</taxon>
    </lineage>
</organism>
<gene>
    <name type="ordered locus">A9601_08291</name>
</gene>
<feature type="chain" id="PRO_0000342714" description="D-fructose 1,6-bisphosphatase class 2/sedoheptulose 1,7-bisphosphatase">
    <location>
        <begin position="1"/>
        <end position="333"/>
    </location>
</feature>
<feature type="binding site" evidence="1">
    <location>
        <position position="33"/>
    </location>
    <ligand>
        <name>Mn(2+)</name>
        <dbReference type="ChEBI" id="CHEBI:29035"/>
        <label>1</label>
    </ligand>
</feature>
<feature type="binding site" evidence="1">
    <location>
        <position position="57"/>
    </location>
    <ligand>
        <name>Mn(2+)</name>
        <dbReference type="ChEBI" id="CHEBI:29035"/>
        <label>1</label>
    </ligand>
</feature>
<feature type="binding site" evidence="1">
    <location>
        <position position="85"/>
    </location>
    <ligand>
        <name>Mn(2+)</name>
        <dbReference type="ChEBI" id="CHEBI:29035"/>
        <label>2</label>
    </ligand>
</feature>
<feature type="binding site" evidence="1">
    <location>
        <begin position="88"/>
        <end position="90"/>
    </location>
    <ligand>
        <name>substrate</name>
    </ligand>
</feature>
<feature type="binding site" evidence="1">
    <location>
        <position position="88"/>
    </location>
    <ligand>
        <name>Mn(2+)</name>
        <dbReference type="ChEBI" id="CHEBI:29035"/>
        <label>2</label>
    </ligand>
</feature>
<feature type="binding site" evidence="1">
    <location>
        <position position="119"/>
    </location>
    <ligand>
        <name>substrate</name>
    </ligand>
</feature>
<feature type="binding site" evidence="1">
    <location>
        <begin position="164"/>
        <end position="166"/>
    </location>
    <ligand>
        <name>substrate</name>
    </ligand>
</feature>
<feature type="binding site" evidence="1">
    <location>
        <begin position="186"/>
        <end position="188"/>
    </location>
    <ligand>
        <name>substrate</name>
    </ligand>
</feature>
<feature type="binding site" evidence="1">
    <location>
        <position position="213"/>
    </location>
    <ligand>
        <name>Mn(2+)</name>
        <dbReference type="ChEBI" id="CHEBI:29035"/>
        <label>2</label>
    </ligand>
</feature>
<accession>A2BQQ2</accession>
<reference key="1">
    <citation type="journal article" date="2007" name="PLoS Genet.">
        <title>Patterns and implications of gene gain and loss in the evolution of Prochlorococcus.</title>
        <authorList>
            <person name="Kettler G.C."/>
            <person name="Martiny A.C."/>
            <person name="Huang K."/>
            <person name="Zucker J."/>
            <person name="Coleman M.L."/>
            <person name="Rodrigue S."/>
            <person name="Chen F."/>
            <person name="Lapidus A."/>
            <person name="Ferriera S."/>
            <person name="Johnson J."/>
            <person name="Steglich C."/>
            <person name="Church G.M."/>
            <person name="Richardson P."/>
            <person name="Chisholm S.W."/>
        </authorList>
    </citation>
    <scope>NUCLEOTIDE SEQUENCE [LARGE SCALE GENOMIC DNA]</scope>
    <source>
        <strain>AS9601</strain>
    </source>
</reference>
<dbReference type="EC" id="3.1.3.11"/>
<dbReference type="EC" id="3.1.3.37"/>
<dbReference type="EMBL" id="CP000551">
    <property type="protein sequence ID" value="ABM70113.1"/>
    <property type="molecule type" value="Genomic_DNA"/>
</dbReference>
<dbReference type="RefSeq" id="WP_011818272.1">
    <property type="nucleotide sequence ID" value="NC_008816.1"/>
</dbReference>
<dbReference type="SMR" id="A2BQQ2"/>
<dbReference type="STRING" id="146891.A9601_08291"/>
<dbReference type="KEGG" id="pmb:A9601_08291"/>
<dbReference type="eggNOG" id="COG1494">
    <property type="taxonomic scope" value="Bacteria"/>
</dbReference>
<dbReference type="HOGENOM" id="CLU_054938_0_0_3"/>
<dbReference type="OrthoDB" id="9779353at2"/>
<dbReference type="UniPathway" id="UPA00116"/>
<dbReference type="Proteomes" id="UP000002590">
    <property type="component" value="Chromosome"/>
</dbReference>
<dbReference type="GO" id="GO:0005829">
    <property type="term" value="C:cytosol"/>
    <property type="evidence" value="ECO:0007669"/>
    <property type="project" value="TreeGrafter"/>
</dbReference>
<dbReference type="GO" id="GO:0042132">
    <property type="term" value="F:fructose 1,6-bisphosphate 1-phosphatase activity"/>
    <property type="evidence" value="ECO:0007669"/>
    <property type="project" value="UniProtKB-EC"/>
</dbReference>
<dbReference type="GO" id="GO:0046872">
    <property type="term" value="F:metal ion binding"/>
    <property type="evidence" value="ECO:0007669"/>
    <property type="project" value="UniProtKB-KW"/>
</dbReference>
<dbReference type="GO" id="GO:0050278">
    <property type="term" value="F:sedoheptulose-bisphosphatase activity"/>
    <property type="evidence" value="ECO:0007669"/>
    <property type="project" value="UniProtKB-EC"/>
</dbReference>
<dbReference type="GO" id="GO:0030388">
    <property type="term" value="P:fructose 1,6-bisphosphate metabolic process"/>
    <property type="evidence" value="ECO:0007669"/>
    <property type="project" value="TreeGrafter"/>
</dbReference>
<dbReference type="GO" id="GO:0006094">
    <property type="term" value="P:gluconeogenesis"/>
    <property type="evidence" value="ECO:0007669"/>
    <property type="project" value="InterPro"/>
</dbReference>
<dbReference type="GO" id="GO:0006071">
    <property type="term" value="P:glycerol metabolic process"/>
    <property type="evidence" value="ECO:0007669"/>
    <property type="project" value="InterPro"/>
</dbReference>
<dbReference type="GO" id="GO:0019253">
    <property type="term" value="P:reductive pentose-phosphate cycle"/>
    <property type="evidence" value="ECO:0007669"/>
    <property type="project" value="UniProtKB-UniPathway"/>
</dbReference>
<dbReference type="CDD" id="cd01516">
    <property type="entry name" value="FBPase_glpX"/>
    <property type="match status" value="1"/>
</dbReference>
<dbReference type="FunFam" id="3.40.190.90:FF:000001">
    <property type="entry name" value="Fructose-1,6-bisphosphatase"/>
    <property type="match status" value="1"/>
</dbReference>
<dbReference type="Gene3D" id="3.40.190.90">
    <property type="match status" value="1"/>
</dbReference>
<dbReference type="Gene3D" id="3.30.540.10">
    <property type="entry name" value="Fructose-1,6-Bisphosphatase, subunit A, domain 1"/>
    <property type="match status" value="1"/>
</dbReference>
<dbReference type="InterPro" id="IPR004464">
    <property type="entry name" value="FBPase_class-2/SBPase"/>
</dbReference>
<dbReference type="NCBIfam" id="TIGR00330">
    <property type="entry name" value="glpX"/>
    <property type="match status" value="1"/>
</dbReference>
<dbReference type="PANTHER" id="PTHR30447:SF0">
    <property type="entry name" value="FRUCTOSE-1,6-BISPHOSPHATASE 1 CLASS 2-RELATED"/>
    <property type="match status" value="1"/>
</dbReference>
<dbReference type="PANTHER" id="PTHR30447">
    <property type="entry name" value="FRUCTOSE-1,6-BISPHOSPHATASE CLASS 2"/>
    <property type="match status" value="1"/>
</dbReference>
<dbReference type="Pfam" id="PF03320">
    <property type="entry name" value="FBPase_glpX"/>
    <property type="match status" value="1"/>
</dbReference>
<dbReference type="PIRSF" id="PIRSF004532">
    <property type="entry name" value="GlpX"/>
    <property type="match status" value="1"/>
</dbReference>
<dbReference type="SUPFAM" id="SSF56655">
    <property type="entry name" value="Carbohydrate phosphatase"/>
    <property type="match status" value="1"/>
</dbReference>